<evidence type="ECO:0000255" key="1">
    <source>
        <dbReference type="HAMAP-Rule" id="MF_00276"/>
    </source>
</evidence>
<name>KDPC_JANMA</name>
<reference key="1">
    <citation type="journal article" date="2007" name="PLoS Genet.">
        <title>Genome analysis of Minibacterium massiliensis highlights the convergent evolution of water-living bacteria.</title>
        <authorList>
            <person name="Audic S."/>
            <person name="Robert C."/>
            <person name="Campagna B."/>
            <person name="Parinello H."/>
            <person name="Claverie J.-M."/>
            <person name="Raoult D."/>
            <person name="Drancourt M."/>
        </authorList>
    </citation>
    <scope>NUCLEOTIDE SEQUENCE [LARGE SCALE GENOMIC DNA]</scope>
    <source>
        <strain>Marseille</strain>
    </source>
</reference>
<sequence length="189" mass="19835">MKSTFRPALVIFAMLTLICGVIYPYAITGIGKLVFPGQAEGSLVTQNGAAVGSSLIGQAFTSPQYFWGRPSATGPMPNNASASGGSNLGPTNPALLDAVKGRIDALKAADPGNTAAVPVDLVTASGSGLDPEISVAAAYYQMPRVARERKMAVEEVKAMIDRISQPQYMGFFGENRVNVLTLNLALDQR</sequence>
<organism>
    <name type="scientific">Janthinobacterium sp. (strain Marseille)</name>
    <name type="common">Minibacterium massiliensis</name>
    <dbReference type="NCBI Taxonomy" id="375286"/>
    <lineage>
        <taxon>Bacteria</taxon>
        <taxon>Pseudomonadati</taxon>
        <taxon>Pseudomonadota</taxon>
        <taxon>Betaproteobacteria</taxon>
        <taxon>Burkholderiales</taxon>
        <taxon>Oxalobacteraceae</taxon>
        <taxon>Janthinobacterium</taxon>
    </lineage>
</organism>
<comment type="function">
    <text evidence="1">Part of the high-affinity ATP-driven potassium transport (or Kdp) system, which catalyzes the hydrolysis of ATP coupled with the electrogenic transport of potassium into the cytoplasm. This subunit acts as a catalytic chaperone that increases the ATP-binding affinity of the ATP-hydrolyzing subunit KdpB by the formation of a transient KdpB/KdpC/ATP ternary complex.</text>
</comment>
<comment type="subunit">
    <text evidence="1">The system is composed of three essential subunits: KdpA, KdpB and KdpC.</text>
</comment>
<comment type="subcellular location">
    <subcellularLocation>
        <location evidence="1">Cell inner membrane</location>
        <topology evidence="1">Single-pass membrane protein</topology>
    </subcellularLocation>
</comment>
<comment type="similarity">
    <text evidence="1">Belongs to the KdpC family.</text>
</comment>
<feature type="chain" id="PRO_1000022290" description="Potassium-transporting ATPase KdpC subunit">
    <location>
        <begin position="1"/>
        <end position="189"/>
    </location>
</feature>
<feature type="transmembrane region" description="Helical" evidence="1">
    <location>
        <begin position="10"/>
        <end position="30"/>
    </location>
</feature>
<accession>A6SZ14</accession>
<dbReference type="EMBL" id="CP000269">
    <property type="protein sequence ID" value="ABR89447.1"/>
    <property type="molecule type" value="Genomic_DNA"/>
</dbReference>
<dbReference type="RefSeq" id="WP_012079674.1">
    <property type="nucleotide sequence ID" value="NC_009659.1"/>
</dbReference>
<dbReference type="SMR" id="A6SZ14"/>
<dbReference type="STRING" id="375286.mma_1821"/>
<dbReference type="KEGG" id="mms:mma_1821"/>
<dbReference type="eggNOG" id="COG2156">
    <property type="taxonomic scope" value="Bacteria"/>
</dbReference>
<dbReference type="HOGENOM" id="CLU_077094_2_0_4"/>
<dbReference type="OrthoDB" id="9788285at2"/>
<dbReference type="Proteomes" id="UP000006388">
    <property type="component" value="Chromosome"/>
</dbReference>
<dbReference type="GO" id="GO:0005886">
    <property type="term" value="C:plasma membrane"/>
    <property type="evidence" value="ECO:0007669"/>
    <property type="project" value="UniProtKB-SubCell"/>
</dbReference>
<dbReference type="GO" id="GO:0005524">
    <property type="term" value="F:ATP binding"/>
    <property type="evidence" value="ECO:0007669"/>
    <property type="project" value="UniProtKB-UniRule"/>
</dbReference>
<dbReference type="GO" id="GO:0008556">
    <property type="term" value="F:P-type potassium transmembrane transporter activity"/>
    <property type="evidence" value="ECO:0007669"/>
    <property type="project" value="InterPro"/>
</dbReference>
<dbReference type="HAMAP" id="MF_00276">
    <property type="entry name" value="KdpC"/>
    <property type="match status" value="1"/>
</dbReference>
<dbReference type="InterPro" id="IPR003820">
    <property type="entry name" value="KdpC"/>
</dbReference>
<dbReference type="NCBIfam" id="TIGR00681">
    <property type="entry name" value="kdpC"/>
    <property type="match status" value="1"/>
</dbReference>
<dbReference type="NCBIfam" id="NF001454">
    <property type="entry name" value="PRK00315.1"/>
    <property type="match status" value="1"/>
</dbReference>
<dbReference type="PANTHER" id="PTHR30042">
    <property type="entry name" value="POTASSIUM-TRANSPORTING ATPASE C CHAIN"/>
    <property type="match status" value="1"/>
</dbReference>
<dbReference type="PANTHER" id="PTHR30042:SF2">
    <property type="entry name" value="POTASSIUM-TRANSPORTING ATPASE KDPC SUBUNIT"/>
    <property type="match status" value="1"/>
</dbReference>
<dbReference type="Pfam" id="PF02669">
    <property type="entry name" value="KdpC"/>
    <property type="match status" value="1"/>
</dbReference>
<dbReference type="PIRSF" id="PIRSF001296">
    <property type="entry name" value="K_ATPase_KdpC"/>
    <property type="match status" value="1"/>
</dbReference>
<proteinExistence type="inferred from homology"/>
<protein>
    <recommendedName>
        <fullName evidence="1">Potassium-transporting ATPase KdpC subunit</fullName>
    </recommendedName>
    <alternativeName>
        <fullName evidence="1">ATP phosphohydrolase [potassium-transporting] C chain</fullName>
    </alternativeName>
    <alternativeName>
        <fullName evidence="1">Potassium-binding and translocating subunit C</fullName>
    </alternativeName>
    <alternativeName>
        <fullName evidence="1">Potassium-translocating ATPase C chain</fullName>
    </alternativeName>
</protein>
<gene>
    <name evidence="1" type="primary">kdpC</name>
    <name type="ordered locus">mma_1821</name>
</gene>
<keyword id="KW-0067">ATP-binding</keyword>
<keyword id="KW-0997">Cell inner membrane</keyword>
<keyword id="KW-1003">Cell membrane</keyword>
<keyword id="KW-0406">Ion transport</keyword>
<keyword id="KW-0472">Membrane</keyword>
<keyword id="KW-0547">Nucleotide-binding</keyword>
<keyword id="KW-0630">Potassium</keyword>
<keyword id="KW-0633">Potassium transport</keyword>
<keyword id="KW-0812">Transmembrane</keyword>
<keyword id="KW-1133">Transmembrane helix</keyword>
<keyword id="KW-0813">Transport</keyword>